<evidence type="ECO:0000255" key="1">
    <source>
        <dbReference type="HAMAP-Rule" id="MF_01705"/>
    </source>
</evidence>
<evidence type="ECO:0000255" key="2">
    <source>
        <dbReference type="PROSITE-ProRule" id="PRU01213"/>
    </source>
</evidence>
<reference key="1">
    <citation type="submission" date="2006-08" db="EMBL/GenBank/DDBJ databases">
        <title>Complete sequence of Shewanella sp. MR-4.</title>
        <authorList>
            <consortium name="US DOE Joint Genome Institute"/>
            <person name="Copeland A."/>
            <person name="Lucas S."/>
            <person name="Lapidus A."/>
            <person name="Barry K."/>
            <person name="Detter J.C."/>
            <person name="Glavina del Rio T."/>
            <person name="Hammon N."/>
            <person name="Israni S."/>
            <person name="Dalin E."/>
            <person name="Tice H."/>
            <person name="Pitluck S."/>
            <person name="Kiss H."/>
            <person name="Brettin T."/>
            <person name="Bruce D."/>
            <person name="Han C."/>
            <person name="Tapia R."/>
            <person name="Gilna P."/>
            <person name="Schmutz J."/>
            <person name="Larimer F."/>
            <person name="Land M."/>
            <person name="Hauser L."/>
            <person name="Kyrpides N."/>
            <person name="Mikhailova N."/>
            <person name="Nealson K."/>
            <person name="Konstantinidis K."/>
            <person name="Klappenbach J."/>
            <person name="Tiedje J."/>
            <person name="Richardson P."/>
        </authorList>
    </citation>
    <scope>NUCLEOTIDE SEQUENCE [LARGE SCALE GENOMIC DNA]</scope>
    <source>
        <strain>MR-4</strain>
    </source>
</reference>
<dbReference type="EC" id="7.3.2.5" evidence="1"/>
<dbReference type="EMBL" id="CP000446">
    <property type="protein sequence ID" value="ABI40267.1"/>
    <property type="molecule type" value="Genomic_DNA"/>
</dbReference>
<dbReference type="RefSeq" id="WP_011623939.1">
    <property type="nucleotide sequence ID" value="NC_008321.1"/>
</dbReference>
<dbReference type="SMR" id="Q0HFA0"/>
<dbReference type="KEGG" id="she:Shewmr4_3197"/>
<dbReference type="HOGENOM" id="CLU_000604_1_1_6"/>
<dbReference type="GO" id="GO:0005886">
    <property type="term" value="C:plasma membrane"/>
    <property type="evidence" value="ECO:0007669"/>
    <property type="project" value="UniProtKB-SubCell"/>
</dbReference>
<dbReference type="GO" id="GO:0015412">
    <property type="term" value="F:ABC-type molybdate transporter activity"/>
    <property type="evidence" value="ECO:0007669"/>
    <property type="project" value="UniProtKB-EC"/>
</dbReference>
<dbReference type="GO" id="GO:0005524">
    <property type="term" value="F:ATP binding"/>
    <property type="evidence" value="ECO:0007669"/>
    <property type="project" value="UniProtKB-KW"/>
</dbReference>
<dbReference type="GO" id="GO:0016887">
    <property type="term" value="F:ATP hydrolysis activity"/>
    <property type="evidence" value="ECO:0007669"/>
    <property type="project" value="InterPro"/>
</dbReference>
<dbReference type="FunFam" id="3.40.50.300:FF:000634">
    <property type="entry name" value="Molybdenum import ATP-binding protein ModC"/>
    <property type="match status" value="1"/>
</dbReference>
<dbReference type="Gene3D" id="2.40.50.100">
    <property type="match status" value="1"/>
</dbReference>
<dbReference type="Gene3D" id="3.40.50.300">
    <property type="entry name" value="P-loop containing nucleotide triphosphate hydrolases"/>
    <property type="match status" value="1"/>
</dbReference>
<dbReference type="InterPro" id="IPR003593">
    <property type="entry name" value="AAA+_ATPase"/>
</dbReference>
<dbReference type="InterPro" id="IPR003439">
    <property type="entry name" value="ABC_transporter-like_ATP-bd"/>
</dbReference>
<dbReference type="InterPro" id="IPR017871">
    <property type="entry name" value="ABC_transporter-like_CS"/>
</dbReference>
<dbReference type="InterPro" id="IPR008995">
    <property type="entry name" value="Mo/tungstate-bd_C_term_dom"/>
</dbReference>
<dbReference type="InterPro" id="IPR011868">
    <property type="entry name" value="ModC_ABC_ATP-bd"/>
</dbReference>
<dbReference type="InterPro" id="IPR050334">
    <property type="entry name" value="Molybdenum_import_ModC"/>
</dbReference>
<dbReference type="InterPro" id="IPR004606">
    <property type="entry name" value="Mop_domain"/>
</dbReference>
<dbReference type="InterPro" id="IPR027417">
    <property type="entry name" value="P-loop_NTPase"/>
</dbReference>
<dbReference type="InterPro" id="IPR005116">
    <property type="entry name" value="Transp-assoc_OB_typ1"/>
</dbReference>
<dbReference type="NCBIfam" id="TIGR02142">
    <property type="entry name" value="modC_ABC"/>
    <property type="match status" value="1"/>
</dbReference>
<dbReference type="NCBIfam" id="NF008355">
    <property type="entry name" value="PRK11144.1"/>
    <property type="match status" value="1"/>
</dbReference>
<dbReference type="PANTHER" id="PTHR43514">
    <property type="entry name" value="ABC TRANSPORTER I FAMILY MEMBER 10"/>
    <property type="match status" value="1"/>
</dbReference>
<dbReference type="PANTHER" id="PTHR43514:SF4">
    <property type="entry name" value="ABC TRANSPORTER I FAMILY MEMBER 10"/>
    <property type="match status" value="1"/>
</dbReference>
<dbReference type="Pfam" id="PF00005">
    <property type="entry name" value="ABC_tran"/>
    <property type="match status" value="1"/>
</dbReference>
<dbReference type="Pfam" id="PF03459">
    <property type="entry name" value="TOBE"/>
    <property type="match status" value="1"/>
</dbReference>
<dbReference type="SMART" id="SM00382">
    <property type="entry name" value="AAA"/>
    <property type="match status" value="1"/>
</dbReference>
<dbReference type="SUPFAM" id="SSF50331">
    <property type="entry name" value="MOP-like"/>
    <property type="match status" value="1"/>
</dbReference>
<dbReference type="SUPFAM" id="SSF52540">
    <property type="entry name" value="P-loop containing nucleoside triphosphate hydrolases"/>
    <property type="match status" value="1"/>
</dbReference>
<dbReference type="PROSITE" id="PS00211">
    <property type="entry name" value="ABC_TRANSPORTER_1"/>
    <property type="match status" value="1"/>
</dbReference>
<dbReference type="PROSITE" id="PS50893">
    <property type="entry name" value="ABC_TRANSPORTER_2"/>
    <property type="match status" value="1"/>
</dbReference>
<dbReference type="PROSITE" id="PS51241">
    <property type="entry name" value="MODC"/>
    <property type="match status" value="1"/>
</dbReference>
<dbReference type="PROSITE" id="PS51866">
    <property type="entry name" value="MOP"/>
    <property type="match status" value="1"/>
</dbReference>
<name>MODC_SHESM</name>
<accession>Q0HFA0</accession>
<proteinExistence type="inferred from homology"/>
<organism>
    <name type="scientific">Shewanella sp. (strain MR-4)</name>
    <dbReference type="NCBI Taxonomy" id="60480"/>
    <lineage>
        <taxon>Bacteria</taxon>
        <taxon>Pseudomonadati</taxon>
        <taxon>Pseudomonadota</taxon>
        <taxon>Gammaproteobacteria</taxon>
        <taxon>Alteromonadales</taxon>
        <taxon>Shewanellaceae</taxon>
        <taxon>Shewanella</taxon>
    </lineage>
</organism>
<comment type="function">
    <text evidence="1">Part of the ABC transporter complex ModABC involved in molybdenum import. Responsible for energy coupling to the transport system.</text>
</comment>
<comment type="catalytic activity">
    <reaction evidence="1">
        <text>molybdate(out) + ATP + H2O = molybdate(in) + ADP + phosphate + H(+)</text>
        <dbReference type="Rhea" id="RHEA:22020"/>
        <dbReference type="ChEBI" id="CHEBI:15377"/>
        <dbReference type="ChEBI" id="CHEBI:15378"/>
        <dbReference type="ChEBI" id="CHEBI:30616"/>
        <dbReference type="ChEBI" id="CHEBI:36264"/>
        <dbReference type="ChEBI" id="CHEBI:43474"/>
        <dbReference type="ChEBI" id="CHEBI:456216"/>
        <dbReference type="EC" id="7.3.2.5"/>
    </reaction>
</comment>
<comment type="subunit">
    <text evidence="1">The complex is composed of two ATP-binding proteins (ModC), two transmembrane proteins (ModB) and a solute-binding protein (ModA).</text>
</comment>
<comment type="subcellular location">
    <subcellularLocation>
        <location evidence="1">Cell inner membrane</location>
        <topology evidence="1">Peripheral membrane protein</topology>
    </subcellularLocation>
</comment>
<comment type="similarity">
    <text evidence="1">Belongs to the ABC transporter superfamily. Molybdate importer (TC 3.A.1.8) family.</text>
</comment>
<feature type="chain" id="PRO_0000271691" description="Molybdenum import ATP-binding protein ModC">
    <location>
        <begin position="1"/>
        <end position="361"/>
    </location>
</feature>
<feature type="domain" description="ABC transporter" evidence="1">
    <location>
        <begin position="1"/>
        <end position="228"/>
    </location>
</feature>
<feature type="domain" description="Mop" evidence="2">
    <location>
        <begin position="289"/>
        <end position="356"/>
    </location>
</feature>
<feature type="binding site" evidence="1">
    <location>
        <begin position="31"/>
        <end position="38"/>
    </location>
    <ligand>
        <name>ATP</name>
        <dbReference type="ChEBI" id="CHEBI:30616"/>
    </ligand>
</feature>
<gene>
    <name evidence="1" type="primary">modC</name>
    <name type="ordered locus">Shewmr4_3197</name>
</gene>
<sequence length="361" mass="40562">MLNINIEKQFSQLQLKVNTQLPLQGVTAVFGRSGAGKTSLVNLLGGLTTPDKGEISLGDTLLFKHKTVNLPPEKRRIGYVFQEARLFPHYSVKGNLTYGMRHKTPELFDKVVSLLGIEKLLSRYPSTLSGGEKQRVAIGRALLTSPQMLLMDEPLASLDLPRKRELLPYLQTLAQELKLPIVYVSHSLDEILQLADHMLVLHQGKMISQGPLTQVWNSEQMRPWVPLQELSSLLSARIADRHPDYPMTRLLMDDGNQLWVSGQLPPTHKQLKVRIQANHVSVCTEEPKGSSIRNLLRGKIKELYPSDNGEQIQLKIALGKDELWANITPWARDELQLIPGKAIYAQIKGVTMTQMDIAESH</sequence>
<keyword id="KW-0067">ATP-binding</keyword>
<keyword id="KW-0997">Cell inner membrane</keyword>
<keyword id="KW-1003">Cell membrane</keyword>
<keyword id="KW-0472">Membrane</keyword>
<keyword id="KW-0500">Molybdenum</keyword>
<keyword id="KW-0547">Nucleotide-binding</keyword>
<keyword id="KW-1278">Translocase</keyword>
<keyword id="KW-0813">Transport</keyword>
<protein>
    <recommendedName>
        <fullName evidence="1">Molybdenum import ATP-binding protein ModC</fullName>
        <ecNumber evidence="1">7.3.2.5</ecNumber>
    </recommendedName>
</protein>